<feature type="chain" id="PRO_0000322566" description="RAS protein activator like-3">
    <location>
        <begin position="1"/>
        <end position="1011"/>
    </location>
</feature>
<feature type="domain" description="PH">
    <location>
        <begin position="197"/>
        <end position="293"/>
    </location>
</feature>
<feature type="domain" description="C2" evidence="3">
    <location>
        <begin position="284"/>
        <end position="404"/>
    </location>
</feature>
<feature type="domain" description="Ras-GAP" evidence="4">
    <location>
        <begin position="474"/>
        <end position="682"/>
    </location>
</feature>
<feature type="region of interest" description="Disordered" evidence="5">
    <location>
        <begin position="1"/>
        <end position="38"/>
    </location>
</feature>
<feature type="region of interest" description="Disordered" evidence="5">
    <location>
        <begin position="52"/>
        <end position="136"/>
    </location>
</feature>
<feature type="region of interest" description="Disordered" evidence="5">
    <location>
        <begin position="151"/>
        <end position="197"/>
    </location>
</feature>
<feature type="region of interest" description="Disordered" evidence="5">
    <location>
        <begin position="209"/>
        <end position="230"/>
    </location>
</feature>
<feature type="region of interest" description="Disordered" evidence="5">
    <location>
        <begin position="756"/>
        <end position="885"/>
    </location>
</feature>
<feature type="region of interest" description="Disordered" evidence="5">
    <location>
        <begin position="987"/>
        <end position="1011"/>
    </location>
</feature>
<feature type="coiled-coil region" evidence="2">
    <location>
        <begin position="888"/>
        <end position="988"/>
    </location>
</feature>
<feature type="compositionally biased region" description="Low complexity" evidence="5">
    <location>
        <begin position="7"/>
        <end position="22"/>
    </location>
</feature>
<feature type="compositionally biased region" description="Basic residues" evidence="5">
    <location>
        <begin position="81"/>
        <end position="95"/>
    </location>
</feature>
<feature type="compositionally biased region" description="Acidic residues" evidence="5">
    <location>
        <begin position="100"/>
        <end position="117"/>
    </location>
</feature>
<feature type="compositionally biased region" description="Pro residues" evidence="5">
    <location>
        <begin position="118"/>
        <end position="131"/>
    </location>
</feature>
<feature type="compositionally biased region" description="Basic and acidic residues" evidence="5">
    <location>
        <begin position="179"/>
        <end position="190"/>
    </location>
</feature>
<feature type="compositionally biased region" description="Basic and acidic residues" evidence="5">
    <location>
        <begin position="792"/>
        <end position="808"/>
    </location>
</feature>
<feature type="compositionally biased region" description="Polar residues" evidence="5">
    <location>
        <begin position="871"/>
        <end position="882"/>
    </location>
</feature>
<feature type="compositionally biased region" description="Polar residues" evidence="5">
    <location>
        <begin position="987"/>
        <end position="999"/>
    </location>
</feature>
<feature type="site" description="Arginine finger; crucial for GTP hydrolysis by stabilizing the transition state" evidence="4">
    <location>
        <position position="500"/>
    </location>
</feature>
<feature type="modified residue" description="Phosphoserine" evidence="9">
    <location>
        <position position="18"/>
    </location>
</feature>
<feature type="modified residue" description="Phosphoserine" evidence="10">
    <location>
        <position position="51"/>
    </location>
</feature>
<feature type="modified residue" description="Phosphoserine" evidence="9">
    <location>
        <position position="164"/>
    </location>
</feature>
<feature type="modified residue" description="Phosphoserine" evidence="1">
    <location>
        <position position="166"/>
    </location>
</feature>
<feature type="modified residue" description="Phosphoserine" evidence="9">
    <location>
        <position position="167"/>
    </location>
</feature>
<feature type="modified residue" description="Phosphoserine" evidence="1">
    <location>
        <position position="170"/>
    </location>
</feature>
<feature type="modified residue" description="Phosphoserine" evidence="1">
    <location>
        <position position="224"/>
    </location>
</feature>
<feature type="modified residue" description="Phosphoserine" evidence="1">
    <location>
        <position position="228"/>
    </location>
</feature>
<feature type="modified residue" description="Phosphoserine" evidence="9">
    <location>
        <position position="231"/>
    </location>
</feature>
<feature type="modified residue" description="Phosphothreonine" evidence="1">
    <location>
        <position position="234"/>
    </location>
</feature>
<feature type="modified residue" description="Phosphoserine" evidence="1">
    <location>
        <position position="787"/>
    </location>
</feature>
<feature type="modified residue" description="Phosphoserine" evidence="1">
    <location>
        <position position="790"/>
    </location>
</feature>
<feature type="modified residue" description="Phosphoserine" evidence="10">
    <location>
        <position position="988"/>
    </location>
</feature>
<feature type="splice variant" id="VSP_033824" description="In isoform 2." evidence="7">
    <location>
        <begin position="944"/>
        <end position="1011"/>
    </location>
</feature>
<feature type="sequence variant" id="VAR_061179" description="In dbSNP:rs58123634.">
    <original>L</original>
    <variation>V</variation>
    <location>
        <position position="251"/>
    </location>
</feature>
<feature type="sequence variant" id="VAR_061180" description="In dbSNP:rs56209154.">
    <original>R</original>
    <variation>C</variation>
    <location>
        <position position="594"/>
    </location>
</feature>
<feature type="sequence variant" id="VAR_061181" description="In dbSNP:rs57208996.">
    <original>P</original>
    <variation>T</variation>
    <location>
        <position position="825"/>
    </location>
</feature>
<dbReference type="EMBL" id="AK122587">
    <property type="protein sequence ID" value="BAC56928.1"/>
    <property type="status" value="ALT_SEQ"/>
    <property type="molecule type" value="mRNA"/>
</dbReference>
<dbReference type="EMBL" id="AC011492">
    <property type="status" value="NOT_ANNOTATED_CDS"/>
    <property type="molecule type" value="Genomic_DNA"/>
</dbReference>
<dbReference type="EMBL" id="AK025091">
    <property type="protein sequence ID" value="BAB15064.1"/>
    <property type="status" value="ALT_INIT"/>
    <property type="molecule type" value="mRNA"/>
</dbReference>
<dbReference type="EMBL" id="BC030281">
    <property type="protein sequence ID" value="AAH30281.1"/>
    <property type="status" value="ALT_INIT"/>
    <property type="molecule type" value="mRNA"/>
</dbReference>
<dbReference type="CCDS" id="CCDS46006.1">
    <molecule id="Q86YV0-1"/>
</dbReference>
<dbReference type="RefSeq" id="NP_001334956.1">
    <property type="nucleotide sequence ID" value="NM_001348027.1"/>
</dbReference>
<dbReference type="RefSeq" id="NP_001334957.1">
    <property type="nucleotide sequence ID" value="NM_001348028.1"/>
</dbReference>
<dbReference type="RefSeq" id="NP_075055.1">
    <molecule id="Q86YV0-1"/>
    <property type="nucleotide sequence ID" value="NM_022904.3"/>
</dbReference>
<dbReference type="SMR" id="Q86YV0"/>
<dbReference type="BioGRID" id="122348">
    <property type="interactions" value="29"/>
</dbReference>
<dbReference type="FunCoup" id="Q86YV0">
    <property type="interactions" value="362"/>
</dbReference>
<dbReference type="IntAct" id="Q86YV0">
    <property type="interactions" value="24"/>
</dbReference>
<dbReference type="STRING" id="9606.ENSP00000341905"/>
<dbReference type="GlyGen" id="Q86YV0">
    <property type="glycosylation" value="2 sites, 1 O-linked glycan (1 site)"/>
</dbReference>
<dbReference type="iPTMnet" id="Q86YV0"/>
<dbReference type="MetOSite" id="Q86YV0"/>
<dbReference type="PhosphoSitePlus" id="Q86YV0"/>
<dbReference type="BioMuta" id="RASAL3"/>
<dbReference type="DMDM" id="172046741"/>
<dbReference type="jPOST" id="Q86YV0"/>
<dbReference type="MassIVE" id="Q86YV0"/>
<dbReference type="PaxDb" id="9606-ENSP00000341905"/>
<dbReference type="PeptideAtlas" id="Q86YV0"/>
<dbReference type="ProteomicsDB" id="70473">
    <molecule id="Q86YV0-1"/>
</dbReference>
<dbReference type="ProteomicsDB" id="70474">
    <molecule id="Q86YV0-2"/>
</dbReference>
<dbReference type="Antibodypedia" id="54246">
    <property type="antibodies" value="65 antibodies from 15 providers"/>
</dbReference>
<dbReference type="DNASU" id="64926"/>
<dbReference type="Ensembl" id="ENST00000343625.12">
    <molecule id="Q86YV0-1"/>
    <property type="protein sequence ID" value="ENSP00000341905.5"/>
    <property type="gene ID" value="ENSG00000105122.13"/>
</dbReference>
<dbReference type="GeneID" id="64926"/>
<dbReference type="KEGG" id="hsa:64926"/>
<dbReference type="MANE-Select" id="ENST00000343625.12">
    <property type="protein sequence ID" value="ENSP00000341905.5"/>
    <property type="RefSeq nucleotide sequence ID" value="NM_022904.3"/>
    <property type="RefSeq protein sequence ID" value="NP_075055.1"/>
</dbReference>
<dbReference type="UCSC" id="uc002nbe.3">
    <molecule id="Q86YV0-1"/>
    <property type="organism name" value="human"/>
</dbReference>
<dbReference type="AGR" id="HGNC:26129"/>
<dbReference type="CTD" id="64926"/>
<dbReference type="DisGeNET" id="64926"/>
<dbReference type="GeneCards" id="RASAL3"/>
<dbReference type="HGNC" id="HGNC:26129">
    <property type="gene designation" value="RASAL3"/>
</dbReference>
<dbReference type="HPA" id="ENSG00000105122">
    <property type="expression patterns" value="Group enriched (bone marrow, intestine, lung, lymphoid tissue)"/>
</dbReference>
<dbReference type="MIM" id="616561">
    <property type="type" value="gene"/>
</dbReference>
<dbReference type="neXtProt" id="NX_Q86YV0"/>
<dbReference type="OpenTargets" id="ENSG00000105122"/>
<dbReference type="PharmGKB" id="PA164725297"/>
<dbReference type="VEuPathDB" id="HostDB:ENSG00000105122"/>
<dbReference type="eggNOG" id="KOG3508">
    <property type="taxonomic scope" value="Eukaryota"/>
</dbReference>
<dbReference type="GeneTree" id="ENSGT00940000161423"/>
<dbReference type="HOGENOM" id="CLU_009167_0_0_1"/>
<dbReference type="InParanoid" id="Q86YV0"/>
<dbReference type="OMA" id="TWGSRSQ"/>
<dbReference type="OrthoDB" id="5572587at2759"/>
<dbReference type="PAN-GO" id="Q86YV0">
    <property type="GO annotations" value="0 GO annotations based on evolutionary models"/>
</dbReference>
<dbReference type="PhylomeDB" id="Q86YV0"/>
<dbReference type="TreeFam" id="TF105303"/>
<dbReference type="PathwayCommons" id="Q86YV0"/>
<dbReference type="Reactome" id="R-HSA-5658442">
    <property type="pathway name" value="Regulation of RAS by GAPs"/>
</dbReference>
<dbReference type="SignaLink" id="Q86YV0"/>
<dbReference type="BioGRID-ORCS" id="64926">
    <property type="hits" value="12 hits in 1150 CRISPR screens"/>
</dbReference>
<dbReference type="ChiTaRS" id="RASAL3">
    <property type="organism name" value="human"/>
</dbReference>
<dbReference type="GenomeRNAi" id="64926"/>
<dbReference type="Pharos" id="Q86YV0">
    <property type="development level" value="Tbio"/>
</dbReference>
<dbReference type="PRO" id="PR:Q86YV0"/>
<dbReference type="Proteomes" id="UP000005640">
    <property type="component" value="Chromosome 19"/>
</dbReference>
<dbReference type="RNAct" id="Q86YV0">
    <property type="molecule type" value="protein"/>
</dbReference>
<dbReference type="Bgee" id="ENSG00000105122">
    <property type="expression patterns" value="Expressed in granulocyte and 158 other cell types or tissues"/>
</dbReference>
<dbReference type="ExpressionAtlas" id="Q86YV0">
    <property type="expression patterns" value="baseline and differential"/>
</dbReference>
<dbReference type="GO" id="GO:0005938">
    <property type="term" value="C:cell cortex"/>
    <property type="evidence" value="ECO:0007669"/>
    <property type="project" value="UniProtKB-SubCell"/>
</dbReference>
<dbReference type="GO" id="GO:0005737">
    <property type="term" value="C:cytoplasm"/>
    <property type="evidence" value="ECO:0000314"/>
    <property type="project" value="UniProtKB"/>
</dbReference>
<dbReference type="GO" id="GO:0098562">
    <property type="term" value="C:cytoplasmic side of membrane"/>
    <property type="evidence" value="ECO:0000314"/>
    <property type="project" value="UniProtKB"/>
</dbReference>
<dbReference type="GO" id="GO:0005829">
    <property type="term" value="C:cytosol"/>
    <property type="evidence" value="ECO:0000304"/>
    <property type="project" value="Reactome"/>
</dbReference>
<dbReference type="GO" id="GO:0070062">
    <property type="term" value="C:extracellular exosome"/>
    <property type="evidence" value="ECO:0007005"/>
    <property type="project" value="UniProtKB"/>
</dbReference>
<dbReference type="GO" id="GO:0016020">
    <property type="term" value="C:membrane"/>
    <property type="evidence" value="ECO:0007005"/>
    <property type="project" value="UniProtKB"/>
</dbReference>
<dbReference type="GO" id="GO:0005096">
    <property type="term" value="F:GTPase activator activity"/>
    <property type="evidence" value="ECO:0007669"/>
    <property type="project" value="UniProtKB-KW"/>
</dbReference>
<dbReference type="GO" id="GO:0042802">
    <property type="term" value="F:identical protein binding"/>
    <property type="evidence" value="ECO:0000353"/>
    <property type="project" value="IntAct"/>
</dbReference>
<dbReference type="GO" id="GO:0046580">
    <property type="term" value="P:negative regulation of Ras protein signal transduction"/>
    <property type="evidence" value="ECO:0000315"/>
    <property type="project" value="UniProtKB"/>
</dbReference>
<dbReference type="GO" id="GO:0051142">
    <property type="term" value="P:positive regulation of NK T cell proliferation"/>
    <property type="evidence" value="ECO:0000315"/>
    <property type="project" value="UniProtKB"/>
</dbReference>
<dbReference type="CDD" id="cd13374">
    <property type="entry name" value="PH_RASAL3"/>
    <property type="match status" value="1"/>
</dbReference>
<dbReference type="CDD" id="cd05136">
    <property type="entry name" value="RasGAP_DAB2IP"/>
    <property type="match status" value="1"/>
</dbReference>
<dbReference type="FunFam" id="1.10.506.10:FF:000032">
    <property type="entry name" value="RAS protein activator like-3"/>
    <property type="match status" value="1"/>
</dbReference>
<dbReference type="Gene3D" id="1.10.506.10">
    <property type="entry name" value="GTPase Activation - p120gap, domain 1"/>
    <property type="match status" value="2"/>
</dbReference>
<dbReference type="InterPro" id="IPR000008">
    <property type="entry name" value="C2_dom"/>
</dbReference>
<dbReference type="InterPro" id="IPR035892">
    <property type="entry name" value="C2_domain_sf"/>
</dbReference>
<dbReference type="InterPro" id="IPR039360">
    <property type="entry name" value="Ras_GTPase"/>
</dbReference>
<dbReference type="InterPro" id="IPR023152">
    <property type="entry name" value="RasGAP_CS"/>
</dbReference>
<dbReference type="InterPro" id="IPR001936">
    <property type="entry name" value="RasGAP_dom"/>
</dbReference>
<dbReference type="InterPro" id="IPR008936">
    <property type="entry name" value="Rho_GTPase_activation_prot"/>
</dbReference>
<dbReference type="PANTHER" id="PTHR10194">
    <property type="entry name" value="RAS GTPASE-ACTIVATING PROTEINS"/>
    <property type="match status" value="1"/>
</dbReference>
<dbReference type="PANTHER" id="PTHR10194:SF96">
    <property type="entry name" value="RAS PROTEIN ACTIVATOR LIKE-3"/>
    <property type="match status" value="1"/>
</dbReference>
<dbReference type="Pfam" id="PF25321">
    <property type="entry name" value="PH_RASGAP"/>
    <property type="match status" value="1"/>
</dbReference>
<dbReference type="Pfam" id="PF00616">
    <property type="entry name" value="RasGAP"/>
    <property type="match status" value="2"/>
</dbReference>
<dbReference type="SMART" id="SM00323">
    <property type="entry name" value="RasGAP"/>
    <property type="match status" value="1"/>
</dbReference>
<dbReference type="SUPFAM" id="SSF49562">
    <property type="entry name" value="C2 domain (Calcium/lipid-binding domain, CaLB)"/>
    <property type="match status" value="1"/>
</dbReference>
<dbReference type="SUPFAM" id="SSF48350">
    <property type="entry name" value="GTPase activation domain, GAP"/>
    <property type="match status" value="1"/>
</dbReference>
<dbReference type="SUPFAM" id="SSF50729">
    <property type="entry name" value="PH domain-like"/>
    <property type="match status" value="1"/>
</dbReference>
<dbReference type="PROSITE" id="PS50004">
    <property type="entry name" value="C2"/>
    <property type="match status" value="1"/>
</dbReference>
<dbReference type="PROSITE" id="PS00509">
    <property type="entry name" value="RAS_GTPASE_ACTIV_1"/>
    <property type="match status" value="1"/>
</dbReference>
<dbReference type="PROSITE" id="PS50018">
    <property type="entry name" value="RAS_GTPASE_ACTIV_2"/>
    <property type="match status" value="1"/>
</dbReference>
<gene>
    <name type="primary">RASAL3</name>
</gene>
<proteinExistence type="evidence at protein level"/>
<comment type="function">
    <text evidence="1">Functions as a Ras GTPase-activating protein. Plays an important role in the expansion and functions of natural killer T (NKT) cells in the liver by negatively regulating RAS activity and the down-stream ERK signaling pathway.</text>
</comment>
<comment type="interaction">
    <interactant intactId="EBI-3437896">
        <id>Q86YV0</id>
    </interactant>
    <interactant intactId="EBI-746752">
        <id>Q9Y2J4</id>
        <label>AMOTL2</label>
    </interactant>
    <organismsDiffer>false</organismsDiffer>
    <experiments>3</experiments>
</comment>
<comment type="interaction">
    <interactant intactId="EBI-3437896">
        <id>Q86YV0</id>
    </interactant>
    <interactant intactId="EBI-742722">
        <id>Q9BUH8</id>
        <label>BEGAIN</label>
    </interactant>
    <organismsDiffer>false</organismsDiffer>
    <experiments>3</experiments>
</comment>
<comment type="interaction">
    <interactant intactId="EBI-3437896">
        <id>Q86YV0</id>
    </interactant>
    <interactant intactId="EBI-10171570">
        <id>Q68D86</id>
        <label>CCDC102B</label>
    </interactant>
    <organismsDiffer>false</organismsDiffer>
    <experiments>3</experiments>
</comment>
<comment type="interaction">
    <interactant intactId="EBI-3437896">
        <id>Q86YV0</id>
    </interactant>
    <interactant intactId="EBI-11063830">
        <id>Q86X02</id>
        <label>CDR2L</label>
    </interactant>
    <organismsDiffer>false</organismsDiffer>
    <experiments>3</experiments>
</comment>
<comment type="interaction">
    <interactant intactId="EBI-3437896">
        <id>Q86YV0</id>
    </interactant>
    <interactant intactId="EBI-745369">
        <id>Q9H4E7</id>
        <label>DEF6</label>
    </interactant>
    <organismsDiffer>false</organismsDiffer>
    <experiments>3</experiments>
</comment>
<comment type="interaction">
    <interactant intactId="EBI-3437896">
        <id>Q86YV0</id>
    </interactant>
    <interactant intactId="EBI-7060731">
        <id>P61978-2</id>
        <label>HNRNPK</label>
    </interactant>
    <organismsDiffer>false</organismsDiffer>
    <experiments>3</experiments>
</comment>
<comment type="interaction">
    <interactant intactId="EBI-3437896">
        <id>Q86YV0</id>
    </interactant>
    <interactant intactId="EBI-746815">
        <id>Q86YM7</id>
        <label>HOMER1</label>
    </interactant>
    <organismsDiffer>false</organismsDiffer>
    <experiments>3</experiments>
</comment>
<comment type="interaction">
    <interactant intactId="EBI-3437896">
        <id>Q86YV0</id>
    </interactant>
    <interactant intactId="EBI-722504">
        <id>O75525</id>
        <label>KHDRBS3</label>
    </interactant>
    <organismsDiffer>false</organismsDiffer>
    <experiments>3</experiments>
</comment>
<comment type="interaction">
    <interactant intactId="EBI-3437896">
        <id>Q86YV0</id>
    </interactant>
    <interactant intactId="EBI-3044087">
        <id>Q7Z3Y8</id>
        <label>KRT27</label>
    </interactant>
    <organismsDiffer>false</organismsDiffer>
    <experiments>3</experiments>
</comment>
<comment type="interaction">
    <interactant intactId="EBI-3437896">
        <id>Q86YV0</id>
    </interactant>
    <interactant intactId="EBI-11522433">
        <id>Q5JR59-3</id>
        <label>MTUS2</label>
    </interactant>
    <organismsDiffer>false</organismsDiffer>
    <experiments>3</experiments>
</comment>
<comment type="interaction">
    <interactant intactId="EBI-3437896">
        <id>Q86YV0</id>
    </interactant>
    <interactant intactId="EBI-741158">
        <id>Q96HA8</id>
        <label>NTAQ1</label>
    </interactant>
    <organismsDiffer>false</organismsDiffer>
    <experiments>3</experiments>
</comment>
<comment type="interaction">
    <interactant intactId="EBI-3437896">
        <id>Q86YV0</id>
    </interactant>
    <interactant intactId="EBI-79165">
        <id>Q9NRD5</id>
        <label>PICK1</label>
    </interactant>
    <organismsDiffer>false</organismsDiffer>
    <experiments>3</experiments>
</comment>
<comment type="interaction">
    <interactant intactId="EBI-3437896">
        <id>Q86YV0</id>
    </interactant>
    <interactant intactId="EBI-1105153">
        <id>Q96KQ4</id>
        <label>PPP1R13B</label>
    </interactant>
    <organismsDiffer>false</organismsDiffer>
    <experiments>3</experiments>
</comment>
<comment type="interaction">
    <interactant intactId="EBI-3437896">
        <id>Q86YV0</id>
    </interactant>
    <interactant intactId="EBI-1383852">
        <id>P54646</id>
        <label>PRKAA2</label>
    </interactant>
    <organismsDiffer>false</organismsDiffer>
    <experiments>3</experiments>
</comment>
<comment type="interaction">
    <interactant intactId="EBI-3437896">
        <id>Q86YV0</id>
    </interactant>
    <interactant intactId="EBI-14093916">
        <id>Q9UJ41-4</id>
        <label>RABGEF1</label>
    </interactant>
    <organismsDiffer>false</organismsDiffer>
    <experiments>3</experiments>
</comment>
<comment type="interaction">
    <interactant intactId="EBI-3437896">
        <id>Q86YV0</id>
    </interactant>
    <interactant intactId="EBI-3437896">
        <id>Q86YV0</id>
        <label>RASAL3</label>
    </interactant>
    <organismsDiffer>false</organismsDiffer>
    <experiments>3</experiments>
</comment>
<comment type="interaction">
    <interactant intactId="EBI-3437896">
        <id>Q86YV0</id>
    </interactant>
    <interactant intactId="EBI-740818">
        <id>Q9Y272</id>
        <label>RASD1</label>
    </interactant>
    <organismsDiffer>false</organismsDiffer>
    <experiments>3</experiments>
</comment>
<comment type="interaction">
    <interactant intactId="EBI-3437896">
        <id>Q86YV0</id>
    </interactant>
    <interactant intactId="EBI-607085">
        <id>P09012</id>
        <label>SNRPA</label>
    </interactant>
    <organismsDiffer>false</organismsDiffer>
    <experiments>3</experiments>
</comment>
<comment type="interaction">
    <interactant intactId="EBI-3437896">
        <id>Q86YV0</id>
    </interactant>
    <interactant intactId="EBI-11952721">
        <id>Q05BL1</id>
        <label>TP53BP2</label>
    </interactant>
    <organismsDiffer>false</organismsDiffer>
    <experiments>3</experiments>
</comment>
<comment type="interaction">
    <interactant intactId="EBI-3437896">
        <id>Q86YV0</id>
    </interactant>
    <interactant intactId="EBI-12026286">
        <id>Q9UPY6-2</id>
        <label>WASF3</label>
    </interactant>
    <organismsDiffer>false</organismsDiffer>
    <experiments>3</experiments>
</comment>
<comment type="interaction">
    <interactant intactId="EBI-3437896">
        <id>Q86YV0</id>
    </interactant>
    <interactant intactId="EBI-527853">
        <id>Q9UGI0</id>
        <label>ZRANB1</label>
    </interactant>
    <organismsDiffer>false</organismsDiffer>
    <experiments>3</experiments>
</comment>
<comment type="subcellular location">
    <subcellularLocation>
        <location evidence="6">Cytoplasm</location>
    </subcellularLocation>
    <subcellularLocation>
        <location evidence="6">Cytoplasm</location>
        <location evidence="6">Cell cortex</location>
    </subcellularLocation>
</comment>
<comment type="alternative products">
    <event type="alternative splicing"/>
    <isoform>
        <id>Q86YV0-1</id>
        <name>1</name>
        <sequence type="displayed"/>
    </isoform>
    <isoform>
        <id>Q86YV0-2</id>
        <name>2</name>
        <sequence type="described" ref="VSP_033824"/>
    </isoform>
</comment>
<comment type="tissue specificity">
    <text evidence="6">Predominantly expressed in cells of hematopoietic lineages.</text>
</comment>
<comment type="sequence caution" evidence="8">
    <conflict type="erroneous initiation">
        <sequence resource="EMBL-CDS" id="AAH30281"/>
    </conflict>
</comment>
<comment type="sequence caution" evidence="8">
    <conflict type="erroneous initiation">
        <sequence resource="EMBL-CDS" id="BAB15064"/>
    </conflict>
</comment>
<comment type="sequence caution" evidence="8">
    <conflict type="erroneous initiation">
        <sequence resource="EMBL-CDS" id="BAC56928"/>
    </conflict>
    <text>Extended N-terminus.</text>
</comment>
<comment type="sequence caution" evidence="8">
    <conflict type="erroneous termination">
        <sequence resource="EMBL-CDS" id="BAC56928"/>
    </conflict>
    <text>Truncated C-terminus.</text>
</comment>
<accession>Q86YV0</accession>
<accession>Q8N2T9</accession>
<accession>Q9H735</accession>
<organism>
    <name type="scientific">Homo sapiens</name>
    <name type="common">Human</name>
    <dbReference type="NCBI Taxonomy" id="9606"/>
    <lineage>
        <taxon>Eukaryota</taxon>
        <taxon>Metazoa</taxon>
        <taxon>Chordata</taxon>
        <taxon>Craniata</taxon>
        <taxon>Vertebrata</taxon>
        <taxon>Euteleostomi</taxon>
        <taxon>Mammalia</taxon>
        <taxon>Eutheria</taxon>
        <taxon>Euarchontoglires</taxon>
        <taxon>Primates</taxon>
        <taxon>Haplorrhini</taxon>
        <taxon>Catarrhini</taxon>
        <taxon>Hominidae</taxon>
        <taxon>Homo</taxon>
    </lineage>
</organism>
<name>RASL3_HUMAN</name>
<keyword id="KW-0025">Alternative splicing</keyword>
<keyword id="KW-0175">Coiled coil</keyword>
<keyword id="KW-0963">Cytoplasm</keyword>
<keyword id="KW-0343">GTPase activation</keyword>
<keyword id="KW-0597">Phosphoprotein</keyword>
<keyword id="KW-1267">Proteomics identification</keyword>
<keyword id="KW-1185">Reference proteome</keyword>
<sequence length="1011" mass="111898">MDPPSPSRTSQTQPTATSPLTSYRWHTGGGGEKAAGGFRWGRFAGWGRALSHQEPMVSTQPAPRSIFRRVLSAPPKESRTSRLRLSKALWGRHKNPPPEPDPEPEQEAPELEPEPELEPPTPQIPEAPTPNVPVWDIGGFTLLDGKLVLLGGEEEGPRRPRVGSASSEGSIHVAMGNFRDPDRMPGKTEPETAGPNQVHNVRGLLKRLKEKKKARLEPRDGPPSALGSRESLATLSELDLGAERDVRIWPLHPSLLGEPHCFQVTWTGGSRCFSCRSAAERDRWIEDLRRQFQPTQDNVEREETWLSVWVHEAKGLPRAAAGAPGVRAELWLDGALLARTAPRAGPGQLFWAERFHFEALPPARRLSLRLRGLGPGSAVLGRVALALEELDAPRAPAAGLERWFPLLGAPAGAALRARIRARRLRVLPSERYKELAEFLTFHYARLCGALEPALPAQAKEELAAAMVRVLRATGRAQALVTDLGTAELARCGGREALLFRENTLATKAIDEYMKLVAQDYLQETLGQVVRRLCASTEDCEVDPSKCPASELPEHQARLRNSCEEVFETIIHSYDWFPAELGIVFSSWREACKERGSEVLGPRLVCASLFLRLLCPAILAPSLFGLAPDHPAPGPARTLTLIAKVIQNLANRAPFGEKEAYMGFMNSFLEEHGPAMQCFLDQVAMVDVDAAPSGYQGSGDLALQLAVLHAQLCTIFAELDQTTRDTLEPLPTILRAIEEGQPVLVSVPMRLPLPPAQVHSSLSAGEKPGFLAPRDLPKHTPLISKSQSLRSVRRSESWARPRPDEERPLRRPRPVQRTQSVPVRRPARRRQSAGPWPRPKGSLSMGPAPRARPWTRDSASLPRKPSVPWQRQMDQPQDRNQALGTHRPVNKLAELQCEVAALREEQKVLSRLVESLSTQIRALTEQQEQLRGQLQDLDSRLRAGSSEFDSEHNLTSNEGHSLKNLEHRLNEMERTQAQLRDAVQSLQLSPRTRGSWSQPQPLKAPCLNGDTT</sequence>
<evidence type="ECO:0000250" key="1">
    <source>
        <dbReference type="UniProtKB" id="Q8C2K5"/>
    </source>
</evidence>
<evidence type="ECO:0000255" key="2"/>
<evidence type="ECO:0000255" key="3">
    <source>
        <dbReference type="PROSITE-ProRule" id="PRU00041"/>
    </source>
</evidence>
<evidence type="ECO:0000255" key="4">
    <source>
        <dbReference type="PROSITE-ProRule" id="PRU00167"/>
    </source>
</evidence>
<evidence type="ECO:0000256" key="5">
    <source>
        <dbReference type="SAM" id="MobiDB-lite"/>
    </source>
</evidence>
<evidence type="ECO:0000269" key="6">
    <source>
    </source>
</evidence>
<evidence type="ECO:0000303" key="7">
    <source>
    </source>
</evidence>
<evidence type="ECO:0000305" key="8"/>
<evidence type="ECO:0007744" key="9">
    <source>
    </source>
</evidence>
<evidence type="ECO:0007744" key="10">
    <source>
    </source>
</evidence>
<reference key="1">
    <citation type="submission" date="2003-02" db="EMBL/GenBank/DDBJ databases">
        <title>The nucleotide sequence of a long cDNA clone isolated from human spleen.</title>
        <authorList>
            <person name="Jikuya H."/>
            <person name="Takano J."/>
            <person name="Nomura N."/>
            <person name="Kikuno R."/>
            <person name="Nagase T."/>
            <person name="Ohara O."/>
        </authorList>
    </citation>
    <scope>NUCLEOTIDE SEQUENCE [LARGE SCALE MRNA] (ISOFORM 1)</scope>
    <source>
        <tissue>Spleen</tissue>
    </source>
</reference>
<reference key="2">
    <citation type="journal article" date="2004" name="Nature">
        <title>The DNA sequence and biology of human chromosome 19.</title>
        <authorList>
            <person name="Grimwood J."/>
            <person name="Gordon L.A."/>
            <person name="Olsen A.S."/>
            <person name="Terry A."/>
            <person name="Schmutz J."/>
            <person name="Lamerdin J.E."/>
            <person name="Hellsten U."/>
            <person name="Goodstein D."/>
            <person name="Couronne O."/>
            <person name="Tran-Gyamfi M."/>
            <person name="Aerts A."/>
            <person name="Altherr M."/>
            <person name="Ashworth L."/>
            <person name="Bajorek E."/>
            <person name="Black S."/>
            <person name="Branscomb E."/>
            <person name="Caenepeel S."/>
            <person name="Carrano A.V."/>
            <person name="Caoile C."/>
            <person name="Chan Y.M."/>
            <person name="Christensen M."/>
            <person name="Cleland C.A."/>
            <person name="Copeland A."/>
            <person name="Dalin E."/>
            <person name="Dehal P."/>
            <person name="Denys M."/>
            <person name="Detter J.C."/>
            <person name="Escobar J."/>
            <person name="Flowers D."/>
            <person name="Fotopulos D."/>
            <person name="Garcia C."/>
            <person name="Georgescu A.M."/>
            <person name="Glavina T."/>
            <person name="Gomez M."/>
            <person name="Gonzales E."/>
            <person name="Groza M."/>
            <person name="Hammon N."/>
            <person name="Hawkins T."/>
            <person name="Haydu L."/>
            <person name="Ho I."/>
            <person name="Huang W."/>
            <person name="Israni S."/>
            <person name="Jett J."/>
            <person name="Kadner K."/>
            <person name="Kimball H."/>
            <person name="Kobayashi A."/>
            <person name="Larionov V."/>
            <person name="Leem S.-H."/>
            <person name="Lopez F."/>
            <person name="Lou Y."/>
            <person name="Lowry S."/>
            <person name="Malfatti S."/>
            <person name="Martinez D."/>
            <person name="McCready P.M."/>
            <person name="Medina C."/>
            <person name="Morgan J."/>
            <person name="Nelson K."/>
            <person name="Nolan M."/>
            <person name="Ovcharenko I."/>
            <person name="Pitluck S."/>
            <person name="Pollard M."/>
            <person name="Popkie A.P."/>
            <person name="Predki P."/>
            <person name="Quan G."/>
            <person name="Ramirez L."/>
            <person name="Rash S."/>
            <person name="Retterer J."/>
            <person name="Rodriguez A."/>
            <person name="Rogers S."/>
            <person name="Salamov A."/>
            <person name="Salazar A."/>
            <person name="She X."/>
            <person name="Smith D."/>
            <person name="Slezak T."/>
            <person name="Solovyev V."/>
            <person name="Thayer N."/>
            <person name="Tice H."/>
            <person name="Tsai M."/>
            <person name="Ustaszewska A."/>
            <person name="Vo N."/>
            <person name="Wagner M."/>
            <person name="Wheeler J."/>
            <person name="Wu K."/>
            <person name="Xie G."/>
            <person name="Yang J."/>
            <person name="Dubchak I."/>
            <person name="Furey T.S."/>
            <person name="DeJong P."/>
            <person name="Dickson M."/>
            <person name="Gordon D."/>
            <person name="Eichler E.E."/>
            <person name="Pennacchio L.A."/>
            <person name="Richardson P."/>
            <person name="Stubbs L."/>
            <person name="Rokhsar D.S."/>
            <person name="Myers R.M."/>
            <person name="Rubin E.M."/>
            <person name="Lucas S.M."/>
        </authorList>
    </citation>
    <scope>NUCLEOTIDE SEQUENCE [LARGE SCALE GENOMIC DNA]</scope>
</reference>
<reference key="3">
    <citation type="journal article" date="2004" name="Nat. Genet.">
        <title>Complete sequencing and characterization of 21,243 full-length human cDNAs.</title>
        <authorList>
            <person name="Ota T."/>
            <person name="Suzuki Y."/>
            <person name="Nishikawa T."/>
            <person name="Otsuki T."/>
            <person name="Sugiyama T."/>
            <person name="Irie R."/>
            <person name="Wakamatsu A."/>
            <person name="Hayashi K."/>
            <person name="Sato H."/>
            <person name="Nagai K."/>
            <person name="Kimura K."/>
            <person name="Makita H."/>
            <person name="Sekine M."/>
            <person name="Obayashi M."/>
            <person name="Nishi T."/>
            <person name="Shibahara T."/>
            <person name="Tanaka T."/>
            <person name="Ishii S."/>
            <person name="Yamamoto J."/>
            <person name="Saito K."/>
            <person name="Kawai Y."/>
            <person name="Isono Y."/>
            <person name="Nakamura Y."/>
            <person name="Nagahari K."/>
            <person name="Murakami K."/>
            <person name="Yasuda T."/>
            <person name="Iwayanagi T."/>
            <person name="Wagatsuma M."/>
            <person name="Shiratori A."/>
            <person name="Sudo H."/>
            <person name="Hosoiri T."/>
            <person name="Kaku Y."/>
            <person name="Kodaira H."/>
            <person name="Kondo H."/>
            <person name="Sugawara M."/>
            <person name="Takahashi M."/>
            <person name="Kanda K."/>
            <person name="Yokoi T."/>
            <person name="Furuya T."/>
            <person name="Kikkawa E."/>
            <person name="Omura Y."/>
            <person name="Abe K."/>
            <person name="Kamihara K."/>
            <person name="Katsuta N."/>
            <person name="Sato K."/>
            <person name="Tanikawa M."/>
            <person name="Yamazaki M."/>
            <person name="Ninomiya K."/>
            <person name="Ishibashi T."/>
            <person name="Yamashita H."/>
            <person name="Murakawa K."/>
            <person name="Fujimori K."/>
            <person name="Tanai H."/>
            <person name="Kimata M."/>
            <person name="Watanabe M."/>
            <person name="Hiraoka S."/>
            <person name="Chiba Y."/>
            <person name="Ishida S."/>
            <person name="Ono Y."/>
            <person name="Takiguchi S."/>
            <person name="Watanabe S."/>
            <person name="Yosida M."/>
            <person name="Hotuta T."/>
            <person name="Kusano J."/>
            <person name="Kanehori K."/>
            <person name="Takahashi-Fujii A."/>
            <person name="Hara H."/>
            <person name="Tanase T.-O."/>
            <person name="Nomura Y."/>
            <person name="Togiya S."/>
            <person name="Komai F."/>
            <person name="Hara R."/>
            <person name="Takeuchi K."/>
            <person name="Arita M."/>
            <person name="Imose N."/>
            <person name="Musashino K."/>
            <person name="Yuuki H."/>
            <person name="Oshima A."/>
            <person name="Sasaki N."/>
            <person name="Aotsuka S."/>
            <person name="Yoshikawa Y."/>
            <person name="Matsunawa H."/>
            <person name="Ichihara T."/>
            <person name="Shiohata N."/>
            <person name="Sano S."/>
            <person name="Moriya S."/>
            <person name="Momiyama H."/>
            <person name="Satoh N."/>
            <person name="Takami S."/>
            <person name="Terashima Y."/>
            <person name="Suzuki O."/>
            <person name="Nakagawa S."/>
            <person name="Senoh A."/>
            <person name="Mizoguchi H."/>
            <person name="Goto Y."/>
            <person name="Shimizu F."/>
            <person name="Wakebe H."/>
            <person name="Hishigaki H."/>
            <person name="Watanabe T."/>
            <person name="Sugiyama A."/>
            <person name="Takemoto M."/>
            <person name="Kawakami B."/>
            <person name="Yamazaki M."/>
            <person name="Watanabe K."/>
            <person name="Kumagai A."/>
            <person name="Itakura S."/>
            <person name="Fukuzumi Y."/>
            <person name="Fujimori Y."/>
            <person name="Komiyama M."/>
            <person name="Tashiro H."/>
            <person name="Tanigami A."/>
            <person name="Fujiwara T."/>
            <person name="Ono T."/>
            <person name="Yamada K."/>
            <person name="Fujii Y."/>
            <person name="Ozaki K."/>
            <person name="Hirao M."/>
            <person name="Ohmori Y."/>
            <person name="Kawabata A."/>
            <person name="Hikiji T."/>
            <person name="Kobatake N."/>
            <person name="Inagaki H."/>
            <person name="Ikema Y."/>
            <person name="Okamoto S."/>
            <person name="Okitani R."/>
            <person name="Kawakami T."/>
            <person name="Noguchi S."/>
            <person name="Itoh T."/>
            <person name="Shigeta K."/>
            <person name="Senba T."/>
            <person name="Matsumura K."/>
            <person name="Nakajima Y."/>
            <person name="Mizuno T."/>
            <person name="Morinaga M."/>
            <person name="Sasaki M."/>
            <person name="Togashi T."/>
            <person name="Oyama M."/>
            <person name="Hata H."/>
            <person name="Watanabe M."/>
            <person name="Komatsu T."/>
            <person name="Mizushima-Sugano J."/>
            <person name="Satoh T."/>
            <person name="Shirai Y."/>
            <person name="Takahashi Y."/>
            <person name="Nakagawa K."/>
            <person name="Okumura K."/>
            <person name="Nagase T."/>
            <person name="Nomura N."/>
            <person name="Kikuchi H."/>
            <person name="Masuho Y."/>
            <person name="Yamashita R."/>
            <person name="Nakai K."/>
            <person name="Yada T."/>
            <person name="Nakamura Y."/>
            <person name="Ohara O."/>
            <person name="Isogai T."/>
            <person name="Sugano S."/>
        </authorList>
    </citation>
    <scope>NUCLEOTIDE SEQUENCE [LARGE SCALE MRNA] OF 715-1011 (ISOFORM 2)</scope>
    <source>
        <tissue>Colon</tissue>
    </source>
</reference>
<reference key="4">
    <citation type="journal article" date="2004" name="Genome Res.">
        <title>The status, quality, and expansion of the NIH full-length cDNA project: the Mammalian Gene Collection (MGC).</title>
        <authorList>
            <consortium name="The MGC Project Team"/>
        </authorList>
    </citation>
    <scope>NUCLEOTIDE SEQUENCE [LARGE SCALE MRNA] OF 723-1011 (ISOFORM 1)</scope>
    <source>
        <tissue>Blood</tissue>
    </source>
</reference>
<reference key="5">
    <citation type="journal article" date="2009" name="Sci. Signal.">
        <title>Quantitative phosphoproteomic analysis of T cell receptor signaling reveals system-wide modulation of protein-protein interactions.</title>
        <authorList>
            <person name="Mayya V."/>
            <person name="Lundgren D.H."/>
            <person name="Hwang S.-I."/>
            <person name="Rezaul K."/>
            <person name="Wu L."/>
            <person name="Eng J.K."/>
            <person name="Rodionov V."/>
            <person name="Han D.K."/>
        </authorList>
    </citation>
    <scope>PHOSPHORYLATION [LARGE SCALE ANALYSIS] AT SER-18; SER-164; SER-167 AND SER-231</scope>
    <scope>IDENTIFICATION BY MASS SPECTROMETRY [LARGE SCALE ANALYSIS]</scope>
    <source>
        <tissue>Leukemic T-cell</tissue>
    </source>
</reference>
<reference key="6">
    <citation type="journal article" date="2014" name="J. Proteomics">
        <title>An enzyme assisted RP-RPLC approach for in-depth analysis of human liver phosphoproteome.</title>
        <authorList>
            <person name="Bian Y."/>
            <person name="Song C."/>
            <person name="Cheng K."/>
            <person name="Dong M."/>
            <person name="Wang F."/>
            <person name="Huang J."/>
            <person name="Sun D."/>
            <person name="Wang L."/>
            <person name="Ye M."/>
            <person name="Zou H."/>
        </authorList>
    </citation>
    <scope>PHOSPHORYLATION [LARGE SCALE ANALYSIS] AT SER-51 AND SER-988</scope>
    <scope>IDENTIFICATION BY MASS SPECTROMETRY [LARGE SCALE ANALYSIS]</scope>
    <source>
        <tissue>Liver</tissue>
    </source>
</reference>
<reference key="7">
    <citation type="journal article" date="2015" name="Eur. J. Immunol.">
        <title>RASAL3, a novel hematopoietic RasGAP protein, regulates the number and functions of NKT cells.</title>
        <authorList>
            <person name="Saito S."/>
            <person name="Kawamura T."/>
            <person name="Higuchi M."/>
            <person name="Kobayashi T."/>
            <person name="Yoshita-Takahashi M."/>
            <person name="Yamazaki M."/>
            <person name="Abe M."/>
            <person name="Sakimura K."/>
            <person name="Kanda Y."/>
            <person name="Kawamura H."/>
            <person name="Jiang S."/>
            <person name="Naito M."/>
            <person name="Yoshizaki T."/>
            <person name="Takahashi M."/>
            <person name="Fujii M."/>
        </authorList>
    </citation>
    <scope>TISSUE SPECIFICITY</scope>
    <scope>SUBCELLULAR LOCATION</scope>
</reference>
<reference key="8">
    <citation type="journal article" date="2015" name="Proteomics">
        <title>N-terminome analysis of the human mitochondrial proteome.</title>
        <authorList>
            <person name="Vaca Jacome A.S."/>
            <person name="Rabilloud T."/>
            <person name="Schaeffer-Reiss C."/>
            <person name="Rompais M."/>
            <person name="Ayoub D."/>
            <person name="Lane L."/>
            <person name="Bairoch A."/>
            <person name="Van Dorsselaer A."/>
            <person name="Carapito C."/>
        </authorList>
    </citation>
    <scope>IDENTIFICATION BY MASS SPECTROMETRY [LARGE SCALE ANALYSIS]</scope>
</reference>
<protein>
    <recommendedName>
        <fullName>RAS protein activator like-3</fullName>
    </recommendedName>
</protein>